<dbReference type="EC" id="7.1.1.-" evidence="1"/>
<dbReference type="EMBL" id="CP000378">
    <property type="protein sequence ID" value="ABF76534.1"/>
    <property type="molecule type" value="Genomic_DNA"/>
</dbReference>
<dbReference type="SMR" id="Q1BV21"/>
<dbReference type="HOGENOM" id="CLU_067218_5_1_4"/>
<dbReference type="GO" id="GO:0005886">
    <property type="term" value="C:plasma membrane"/>
    <property type="evidence" value="ECO:0007669"/>
    <property type="project" value="UniProtKB-SubCell"/>
</dbReference>
<dbReference type="GO" id="GO:0051539">
    <property type="term" value="F:4 iron, 4 sulfur cluster binding"/>
    <property type="evidence" value="ECO:0007669"/>
    <property type="project" value="UniProtKB-KW"/>
</dbReference>
<dbReference type="GO" id="GO:0005506">
    <property type="term" value="F:iron ion binding"/>
    <property type="evidence" value="ECO:0007669"/>
    <property type="project" value="UniProtKB-UniRule"/>
</dbReference>
<dbReference type="GO" id="GO:0050136">
    <property type="term" value="F:NADH:ubiquinone reductase (non-electrogenic) activity"/>
    <property type="evidence" value="ECO:0007669"/>
    <property type="project" value="UniProtKB-UniRule"/>
</dbReference>
<dbReference type="GO" id="GO:0048038">
    <property type="term" value="F:quinone binding"/>
    <property type="evidence" value="ECO:0007669"/>
    <property type="project" value="UniProtKB-KW"/>
</dbReference>
<dbReference type="GO" id="GO:0009060">
    <property type="term" value="P:aerobic respiration"/>
    <property type="evidence" value="ECO:0007669"/>
    <property type="project" value="TreeGrafter"/>
</dbReference>
<dbReference type="FunFam" id="3.30.70.3270:FF:000003">
    <property type="entry name" value="NADH-quinone oxidoreductase subunit I"/>
    <property type="match status" value="1"/>
</dbReference>
<dbReference type="Gene3D" id="3.30.70.3270">
    <property type="match status" value="1"/>
</dbReference>
<dbReference type="HAMAP" id="MF_01351">
    <property type="entry name" value="NDH1_NuoI"/>
    <property type="match status" value="1"/>
</dbReference>
<dbReference type="InterPro" id="IPR017896">
    <property type="entry name" value="4Fe4S_Fe-S-bd"/>
</dbReference>
<dbReference type="InterPro" id="IPR017900">
    <property type="entry name" value="4Fe4S_Fe_S_CS"/>
</dbReference>
<dbReference type="InterPro" id="IPR010226">
    <property type="entry name" value="NADH_quinone_OxRdtase_chainI"/>
</dbReference>
<dbReference type="NCBIfam" id="TIGR01971">
    <property type="entry name" value="NuoI"/>
    <property type="match status" value="1"/>
</dbReference>
<dbReference type="NCBIfam" id="NF004538">
    <property type="entry name" value="PRK05888.1-4"/>
    <property type="match status" value="1"/>
</dbReference>
<dbReference type="NCBIfam" id="NF004539">
    <property type="entry name" value="PRK05888.1-5"/>
    <property type="match status" value="1"/>
</dbReference>
<dbReference type="PANTHER" id="PTHR10849:SF20">
    <property type="entry name" value="NADH DEHYDROGENASE [UBIQUINONE] IRON-SULFUR PROTEIN 8, MITOCHONDRIAL"/>
    <property type="match status" value="1"/>
</dbReference>
<dbReference type="PANTHER" id="PTHR10849">
    <property type="entry name" value="NADH DEHYDROGENASE UBIQUINONE IRON-SULFUR PROTEIN 8, MITOCHONDRIAL"/>
    <property type="match status" value="1"/>
</dbReference>
<dbReference type="Pfam" id="PF12838">
    <property type="entry name" value="Fer4_7"/>
    <property type="match status" value="1"/>
</dbReference>
<dbReference type="SUPFAM" id="SSF54862">
    <property type="entry name" value="4Fe-4S ferredoxins"/>
    <property type="match status" value="1"/>
</dbReference>
<dbReference type="PROSITE" id="PS00198">
    <property type="entry name" value="4FE4S_FER_1"/>
    <property type="match status" value="2"/>
</dbReference>
<dbReference type="PROSITE" id="PS51379">
    <property type="entry name" value="4FE4S_FER_2"/>
    <property type="match status" value="2"/>
</dbReference>
<organism>
    <name type="scientific">Burkholderia orbicola (strain AU 1054)</name>
    <dbReference type="NCBI Taxonomy" id="331271"/>
    <lineage>
        <taxon>Bacteria</taxon>
        <taxon>Pseudomonadati</taxon>
        <taxon>Pseudomonadota</taxon>
        <taxon>Betaproteobacteria</taxon>
        <taxon>Burkholderiales</taxon>
        <taxon>Burkholderiaceae</taxon>
        <taxon>Burkholderia</taxon>
        <taxon>Burkholderia cepacia complex</taxon>
        <taxon>Burkholderia orbicola</taxon>
    </lineage>
</organism>
<sequence>MTAIQHFFKTFFLTELLKGLALTGRYTFKRKFTVQFPEEKTPISPRFRGLHALRRYENGEERCIACKLCEAVCPALAITIESETRADNTRRTTRYDIDLTKCIFCGFCEESCPVDSIVETQILEYHGEKRGDLYFTKEMLLAVGDRYEKDIAAAKAADAPYR</sequence>
<reference key="1">
    <citation type="submission" date="2006-05" db="EMBL/GenBank/DDBJ databases">
        <title>Complete sequence of chromosome 1 of Burkholderia cenocepacia AU 1054.</title>
        <authorList>
            <consortium name="US DOE Joint Genome Institute"/>
            <person name="Copeland A."/>
            <person name="Lucas S."/>
            <person name="Lapidus A."/>
            <person name="Barry K."/>
            <person name="Detter J.C."/>
            <person name="Glavina del Rio T."/>
            <person name="Hammon N."/>
            <person name="Israni S."/>
            <person name="Dalin E."/>
            <person name="Tice H."/>
            <person name="Pitluck S."/>
            <person name="Chain P."/>
            <person name="Malfatti S."/>
            <person name="Shin M."/>
            <person name="Vergez L."/>
            <person name="Schmutz J."/>
            <person name="Larimer F."/>
            <person name="Land M."/>
            <person name="Hauser L."/>
            <person name="Kyrpides N."/>
            <person name="Lykidis A."/>
            <person name="LiPuma J.J."/>
            <person name="Konstantinidis K."/>
            <person name="Tiedje J.M."/>
            <person name="Richardson P."/>
        </authorList>
    </citation>
    <scope>NUCLEOTIDE SEQUENCE [LARGE SCALE GENOMIC DNA]</scope>
    <source>
        <strain>AU 1054</strain>
    </source>
</reference>
<gene>
    <name evidence="1" type="primary">nuoI</name>
    <name type="ordered locus">Bcen_1629</name>
</gene>
<evidence type="ECO:0000255" key="1">
    <source>
        <dbReference type="HAMAP-Rule" id="MF_01351"/>
    </source>
</evidence>
<name>NUOI_BURO1</name>
<feature type="chain" id="PRO_0000250887" description="NADH-quinone oxidoreductase subunit I">
    <location>
        <begin position="1"/>
        <end position="162"/>
    </location>
</feature>
<feature type="domain" description="4Fe-4S ferredoxin-type 1" evidence="1">
    <location>
        <begin position="54"/>
        <end position="83"/>
    </location>
</feature>
<feature type="domain" description="4Fe-4S ferredoxin-type 2" evidence="1">
    <location>
        <begin position="93"/>
        <end position="122"/>
    </location>
</feature>
<feature type="binding site" evidence="1">
    <location>
        <position position="63"/>
    </location>
    <ligand>
        <name>[4Fe-4S] cluster</name>
        <dbReference type="ChEBI" id="CHEBI:49883"/>
        <label>1</label>
    </ligand>
</feature>
<feature type="binding site" evidence="1">
    <location>
        <position position="66"/>
    </location>
    <ligand>
        <name>[4Fe-4S] cluster</name>
        <dbReference type="ChEBI" id="CHEBI:49883"/>
        <label>1</label>
    </ligand>
</feature>
<feature type="binding site" evidence="1">
    <location>
        <position position="69"/>
    </location>
    <ligand>
        <name>[4Fe-4S] cluster</name>
        <dbReference type="ChEBI" id="CHEBI:49883"/>
        <label>1</label>
    </ligand>
</feature>
<feature type="binding site" evidence="1">
    <location>
        <position position="73"/>
    </location>
    <ligand>
        <name>[4Fe-4S] cluster</name>
        <dbReference type="ChEBI" id="CHEBI:49883"/>
        <label>2</label>
    </ligand>
</feature>
<feature type="binding site" evidence="1">
    <location>
        <position position="102"/>
    </location>
    <ligand>
        <name>[4Fe-4S] cluster</name>
        <dbReference type="ChEBI" id="CHEBI:49883"/>
        <label>2</label>
    </ligand>
</feature>
<feature type="binding site" evidence="1">
    <location>
        <position position="105"/>
    </location>
    <ligand>
        <name>[4Fe-4S] cluster</name>
        <dbReference type="ChEBI" id="CHEBI:49883"/>
        <label>2</label>
    </ligand>
</feature>
<feature type="binding site" evidence="1">
    <location>
        <position position="108"/>
    </location>
    <ligand>
        <name>[4Fe-4S] cluster</name>
        <dbReference type="ChEBI" id="CHEBI:49883"/>
        <label>2</label>
    </ligand>
</feature>
<feature type="binding site" evidence="1">
    <location>
        <position position="112"/>
    </location>
    <ligand>
        <name>[4Fe-4S] cluster</name>
        <dbReference type="ChEBI" id="CHEBI:49883"/>
        <label>1</label>
    </ligand>
</feature>
<accession>Q1BV21</accession>
<protein>
    <recommendedName>
        <fullName evidence="1">NADH-quinone oxidoreductase subunit I</fullName>
        <ecNumber evidence="1">7.1.1.-</ecNumber>
    </recommendedName>
    <alternativeName>
        <fullName evidence="1">NADH dehydrogenase I subunit I</fullName>
    </alternativeName>
    <alternativeName>
        <fullName evidence="1">NDH-1 subunit I</fullName>
    </alternativeName>
</protein>
<keyword id="KW-0004">4Fe-4S</keyword>
<keyword id="KW-0997">Cell inner membrane</keyword>
<keyword id="KW-1003">Cell membrane</keyword>
<keyword id="KW-0408">Iron</keyword>
<keyword id="KW-0411">Iron-sulfur</keyword>
<keyword id="KW-0472">Membrane</keyword>
<keyword id="KW-0479">Metal-binding</keyword>
<keyword id="KW-0520">NAD</keyword>
<keyword id="KW-0874">Quinone</keyword>
<keyword id="KW-0677">Repeat</keyword>
<keyword id="KW-1278">Translocase</keyword>
<keyword id="KW-0830">Ubiquinone</keyword>
<comment type="function">
    <text evidence="1">NDH-1 shuttles electrons from NADH, via FMN and iron-sulfur (Fe-S) centers, to quinones in the respiratory chain. The immediate electron acceptor for the enzyme in this species is believed to be ubiquinone. Couples the redox reaction to proton translocation (for every two electrons transferred, four hydrogen ions are translocated across the cytoplasmic membrane), and thus conserves the redox energy in a proton gradient.</text>
</comment>
<comment type="catalytic activity">
    <reaction evidence="1">
        <text>a quinone + NADH + 5 H(+)(in) = a quinol + NAD(+) + 4 H(+)(out)</text>
        <dbReference type="Rhea" id="RHEA:57888"/>
        <dbReference type="ChEBI" id="CHEBI:15378"/>
        <dbReference type="ChEBI" id="CHEBI:24646"/>
        <dbReference type="ChEBI" id="CHEBI:57540"/>
        <dbReference type="ChEBI" id="CHEBI:57945"/>
        <dbReference type="ChEBI" id="CHEBI:132124"/>
    </reaction>
</comment>
<comment type="cofactor">
    <cofactor evidence="1">
        <name>[4Fe-4S] cluster</name>
        <dbReference type="ChEBI" id="CHEBI:49883"/>
    </cofactor>
    <text evidence="1">Binds 2 [4Fe-4S] clusters per subunit.</text>
</comment>
<comment type="subunit">
    <text evidence="1">NDH-1 is composed of 14 different subunits. Subunits NuoA, H, J, K, L, M, N constitute the membrane sector of the complex.</text>
</comment>
<comment type="subcellular location">
    <subcellularLocation>
        <location evidence="1">Cell inner membrane</location>
        <topology evidence="1">Peripheral membrane protein</topology>
    </subcellularLocation>
</comment>
<comment type="similarity">
    <text evidence="1">Belongs to the complex I 23 kDa subunit family.</text>
</comment>
<proteinExistence type="inferred from homology"/>